<evidence type="ECO:0000250" key="1"/>
<evidence type="ECO:0000250" key="2">
    <source>
        <dbReference type="UniProtKB" id="Q6P587"/>
    </source>
</evidence>
<evidence type="ECO:0000305" key="3"/>
<gene>
    <name type="primary">fahd2</name>
    <name type="ORF">DDB_G0293650</name>
</gene>
<organism>
    <name type="scientific">Dictyostelium discoideum</name>
    <name type="common">Social amoeba</name>
    <dbReference type="NCBI Taxonomy" id="44689"/>
    <lineage>
        <taxon>Eukaryota</taxon>
        <taxon>Amoebozoa</taxon>
        <taxon>Evosea</taxon>
        <taxon>Eumycetozoa</taxon>
        <taxon>Dictyostelia</taxon>
        <taxon>Dictyosteliales</taxon>
        <taxon>Dictyosteliaceae</taxon>
        <taxon>Dictyostelium</taxon>
    </lineage>
</organism>
<comment type="function">
    <text evidence="1">May have hydrolase activity.</text>
</comment>
<comment type="cofactor">
    <cofactor evidence="3">
        <name>Ca(2+)</name>
        <dbReference type="ChEBI" id="CHEBI:29108"/>
    </cofactor>
</comment>
<comment type="cofactor">
    <cofactor evidence="3">
        <name>Mg(2+)</name>
        <dbReference type="ChEBI" id="CHEBI:18420"/>
    </cofactor>
</comment>
<comment type="similarity">
    <text evidence="3">Belongs to the FAH family.</text>
</comment>
<sequence length="305" mass="33671">MNRANFGLIKLVTYIPNVGEQSKRLGALLENSIIDLCSADKSIPNDMRSFLSLNSTDKWSKVINVINNINNRRIPIENCKIKAPIEPGKIICIGLNYKEHANEAKMAIPKEPIVFSKFDNAICGPNDSIIKPVESDEVDYEVELVVVIGKQAKNVSESDALQYVAGYTVGNDVSARDWQLRKNNSQWLLGKTFDTFAPIGPSIVINPEVAALSDDTYFDPNNLSIKCTLNGQVVQNSTTKEFIFNIQTVVSYLSKLFTLNPGDIIFTGTPSGVGFIRKPNPIFLKSGDVIKCEIEELGSLVNNVK</sequence>
<accession>Q54BF3</accession>
<proteinExistence type="inferred from homology"/>
<protein>
    <recommendedName>
        <fullName>Fumarylacetoacetate hydrolase domain-containing protein 2 homolog</fullName>
        <ecNumber>3.-.-.-</ecNumber>
    </recommendedName>
</protein>
<feature type="chain" id="PRO_0000328491" description="Fumarylacetoacetate hydrolase domain-containing protein 2 homolog">
    <location>
        <begin position="1"/>
        <end position="305"/>
    </location>
</feature>
<feature type="binding site" evidence="2">
    <location>
        <position position="141"/>
    </location>
    <ligand>
        <name>a divalent metal cation</name>
        <dbReference type="ChEBI" id="CHEBI:60240"/>
    </ligand>
</feature>
<feature type="binding site" evidence="2">
    <location>
        <position position="143"/>
    </location>
    <ligand>
        <name>a divalent metal cation</name>
        <dbReference type="ChEBI" id="CHEBI:60240"/>
    </ligand>
</feature>
<feature type="binding site" evidence="2">
    <location>
        <position position="172"/>
    </location>
    <ligand>
        <name>a divalent metal cation</name>
        <dbReference type="ChEBI" id="CHEBI:60240"/>
    </ligand>
</feature>
<name>FAHD2_DICDI</name>
<dbReference type="EC" id="3.-.-.-"/>
<dbReference type="EMBL" id="AAFI02000218">
    <property type="protein sequence ID" value="EAL60637.1"/>
    <property type="molecule type" value="Genomic_DNA"/>
</dbReference>
<dbReference type="RefSeq" id="XP_629076.1">
    <property type="nucleotide sequence ID" value="XM_629074.1"/>
</dbReference>
<dbReference type="SMR" id="Q54BF3"/>
<dbReference type="FunCoup" id="Q54BF3">
    <property type="interactions" value="6"/>
</dbReference>
<dbReference type="STRING" id="44689.Q54BF3"/>
<dbReference type="PaxDb" id="44689-DDB0237519"/>
<dbReference type="EnsemblProtists" id="EAL60637">
    <property type="protein sequence ID" value="EAL60637"/>
    <property type="gene ID" value="DDB_G0293650"/>
</dbReference>
<dbReference type="GeneID" id="8629368"/>
<dbReference type="KEGG" id="ddi:DDB_G0293650"/>
<dbReference type="dictyBase" id="DDB_G0293650">
    <property type="gene designation" value="fahd2"/>
</dbReference>
<dbReference type="VEuPathDB" id="AmoebaDB:DDB_G0293650"/>
<dbReference type="eggNOG" id="KOG1535">
    <property type="taxonomic scope" value="Eukaryota"/>
</dbReference>
<dbReference type="HOGENOM" id="CLU_028458_3_2_1"/>
<dbReference type="InParanoid" id="Q54BF3"/>
<dbReference type="OMA" id="CNKIVAP"/>
<dbReference type="PhylomeDB" id="Q54BF3"/>
<dbReference type="PRO" id="PR:Q54BF3"/>
<dbReference type="Proteomes" id="UP000002195">
    <property type="component" value="Chromosome 6"/>
</dbReference>
<dbReference type="GO" id="GO:0016787">
    <property type="term" value="F:hydrolase activity"/>
    <property type="evidence" value="ECO:0007669"/>
    <property type="project" value="UniProtKB-KW"/>
</dbReference>
<dbReference type="GO" id="GO:0046872">
    <property type="term" value="F:metal ion binding"/>
    <property type="evidence" value="ECO:0007669"/>
    <property type="project" value="UniProtKB-KW"/>
</dbReference>
<dbReference type="GO" id="GO:0044281">
    <property type="term" value="P:small molecule metabolic process"/>
    <property type="evidence" value="ECO:0007669"/>
    <property type="project" value="UniProtKB-ARBA"/>
</dbReference>
<dbReference type="FunFam" id="3.90.850.10:FF:000002">
    <property type="entry name" value="2-hydroxyhepta-2,4-diene-1,7-dioate isomerase"/>
    <property type="match status" value="1"/>
</dbReference>
<dbReference type="Gene3D" id="3.90.850.10">
    <property type="entry name" value="Fumarylacetoacetase-like, C-terminal domain"/>
    <property type="match status" value="1"/>
</dbReference>
<dbReference type="InterPro" id="IPR051121">
    <property type="entry name" value="FAH"/>
</dbReference>
<dbReference type="InterPro" id="IPR011234">
    <property type="entry name" value="Fumarylacetoacetase-like_C"/>
</dbReference>
<dbReference type="InterPro" id="IPR036663">
    <property type="entry name" value="Fumarylacetoacetase_C_sf"/>
</dbReference>
<dbReference type="PANTHER" id="PTHR42796:SF4">
    <property type="entry name" value="FUMARYLACETOACETATE HYDROLASE DOMAIN-CONTAINING PROTEIN 2A"/>
    <property type="match status" value="1"/>
</dbReference>
<dbReference type="PANTHER" id="PTHR42796">
    <property type="entry name" value="FUMARYLACETOACETATE HYDROLASE DOMAIN-CONTAINING PROTEIN 2A-RELATED"/>
    <property type="match status" value="1"/>
</dbReference>
<dbReference type="Pfam" id="PF01557">
    <property type="entry name" value="FAA_hydrolase"/>
    <property type="match status" value="1"/>
</dbReference>
<dbReference type="SUPFAM" id="SSF56529">
    <property type="entry name" value="FAH"/>
    <property type="match status" value="1"/>
</dbReference>
<keyword id="KW-0106">Calcium</keyword>
<keyword id="KW-0378">Hydrolase</keyword>
<keyword id="KW-0460">Magnesium</keyword>
<keyword id="KW-0479">Metal-binding</keyword>
<keyword id="KW-1185">Reference proteome</keyword>
<reference key="1">
    <citation type="journal article" date="2005" name="Nature">
        <title>The genome of the social amoeba Dictyostelium discoideum.</title>
        <authorList>
            <person name="Eichinger L."/>
            <person name="Pachebat J.A."/>
            <person name="Gloeckner G."/>
            <person name="Rajandream M.A."/>
            <person name="Sucgang R."/>
            <person name="Berriman M."/>
            <person name="Song J."/>
            <person name="Olsen R."/>
            <person name="Szafranski K."/>
            <person name="Xu Q."/>
            <person name="Tunggal B."/>
            <person name="Kummerfeld S."/>
            <person name="Madera M."/>
            <person name="Konfortov B.A."/>
            <person name="Rivero F."/>
            <person name="Bankier A.T."/>
            <person name="Lehmann R."/>
            <person name="Hamlin N."/>
            <person name="Davies R."/>
            <person name="Gaudet P."/>
            <person name="Fey P."/>
            <person name="Pilcher K."/>
            <person name="Chen G."/>
            <person name="Saunders D."/>
            <person name="Sodergren E.J."/>
            <person name="Davis P."/>
            <person name="Kerhornou A."/>
            <person name="Nie X."/>
            <person name="Hall N."/>
            <person name="Anjard C."/>
            <person name="Hemphill L."/>
            <person name="Bason N."/>
            <person name="Farbrother P."/>
            <person name="Desany B."/>
            <person name="Just E."/>
            <person name="Morio T."/>
            <person name="Rost R."/>
            <person name="Churcher C.M."/>
            <person name="Cooper J."/>
            <person name="Haydock S."/>
            <person name="van Driessche N."/>
            <person name="Cronin A."/>
            <person name="Goodhead I."/>
            <person name="Muzny D.M."/>
            <person name="Mourier T."/>
            <person name="Pain A."/>
            <person name="Lu M."/>
            <person name="Harper D."/>
            <person name="Lindsay R."/>
            <person name="Hauser H."/>
            <person name="James K.D."/>
            <person name="Quiles M."/>
            <person name="Madan Babu M."/>
            <person name="Saito T."/>
            <person name="Buchrieser C."/>
            <person name="Wardroper A."/>
            <person name="Felder M."/>
            <person name="Thangavelu M."/>
            <person name="Johnson D."/>
            <person name="Knights A."/>
            <person name="Loulseged H."/>
            <person name="Mungall K.L."/>
            <person name="Oliver K."/>
            <person name="Price C."/>
            <person name="Quail M.A."/>
            <person name="Urushihara H."/>
            <person name="Hernandez J."/>
            <person name="Rabbinowitsch E."/>
            <person name="Steffen D."/>
            <person name="Sanders M."/>
            <person name="Ma J."/>
            <person name="Kohara Y."/>
            <person name="Sharp S."/>
            <person name="Simmonds M.N."/>
            <person name="Spiegler S."/>
            <person name="Tivey A."/>
            <person name="Sugano S."/>
            <person name="White B."/>
            <person name="Walker D."/>
            <person name="Woodward J.R."/>
            <person name="Winckler T."/>
            <person name="Tanaka Y."/>
            <person name="Shaulsky G."/>
            <person name="Schleicher M."/>
            <person name="Weinstock G.M."/>
            <person name="Rosenthal A."/>
            <person name="Cox E.C."/>
            <person name="Chisholm R.L."/>
            <person name="Gibbs R.A."/>
            <person name="Loomis W.F."/>
            <person name="Platzer M."/>
            <person name="Kay R.R."/>
            <person name="Williams J.G."/>
            <person name="Dear P.H."/>
            <person name="Noegel A.A."/>
            <person name="Barrell B.G."/>
            <person name="Kuspa A."/>
        </authorList>
    </citation>
    <scope>NUCLEOTIDE SEQUENCE [LARGE SCALE GENOMIC DNA]</scope>
    <source>
        <strain>AX4</strain>
    </source>
</reference>